<geneLocation type="chloroplast"/>
<feature type="propeptide" id="PRO_0000031407" evidence="2">
    <location>
        <begin position="1"/>
        <end position="2"/>
    </location>
</feature>
<feature type="chain" id="PRO_0000031408" description="Ribulose bisphosphate carboxylase large chain">
    <location>
        <begin position="3"/>
        <end position="473" status="greater than"/>
    </location>
</feature>
<feature type="active site" description="Proton acceptor" evidence="2">
    <location>
        <position position="175"/>
    </location>
</feature>
<feature type="active site" description="Proton acceptor" evidence="2">
    <location>
        <position position="294"/>
    </location>
</feature>
<feature type="binding site" description="in homodimeric partner" evidence="2">
    <location>
        <position position="123"/>
    </location>
    <ligand>
        <name>substrate</name>
    </ligand>
</feature>
<feature type="binding site" evidence="2">
    <location>
        <position position="173"/>
    </location>
    <ligand>
        <name>substrate</name>
    </ligand>
</feature>
<feature type="binding site" evidence="2">
    <location>
        <position position="177"/>
    </location>
    <ligand>
        <name>substrate</name>
    </ligand>
</feature>
<feature type="binding site" description="via carbamate group" evidence="2">
    <location>
        <position position="201"/>
    </location>
    <ligand>
        <name>Mg(2+)</name>
        <dbReference type="ChEBI" id="CHEBI:18420"/>
    </ligand>
</feature>
<feature type="binding site" evidence="2">
    <location>
        <position position="203"/>
    </location>
    <ligand>
        <name>Mg(2+)</name>
        <dbReference type="ChEBI" id="CHEBI:18420"/>
    </ligand>
</feature>
<feature type="binding site" evidence="2">
    <location>
        <position position="204"/>
    </location>
    <ligand>
        <name>Mg(2+)</name>
        <dbReference type="ChEBI" id="CHEBI:18420"/>
    </ligand>
</feature>
<feature type="binding site" evidence="2">
    <location>
        <position position="295"/>
    </location>
    <ligand>
        <name>substrate</name>
    </ligand>
</feature>
<feature type="binding site" evidence="2">
    <location>
        <position position="327"/>
    </location>
    <ligand>
        <name>substrate</name>
    </ligand>
</feature>
<feature type="binding site" evidence="2">
    <location>
        <position position="379"/>
    </location>
    <ligand>
        <name>substrate</name>
    </ligand>
</feature>
<feature type="site" description="Transition state stabilizer" evidence="2">
    <location>
        <position position="334"/>
    </location>
</feature>
<feature type="modified residue" description="N6-carboxylysine" evidence="2">
    <location>
        <position position="201"/>
    </location>
</feature>
<feature type="modified residue" description="Phosphoserine" evidence="1">
    <location>
        <position position="208"/>
    </location>
</feature>
<feature type="modified residue" description="Phosphothreonine" evidence="1">
    <location>
        <position position="330"/>
    </location>
</feature>
<feature type="disulfide bond" description="Interchain; in linked form" evidence="2">
    <location>
        <position position="247"/>
    </location>
</feature>
<feature type="non-terminal residue">
    <location>
        <position position="473"/>
    </location>
</feature>
<comment type="function">
    <text evidence="2">RuBisCO catalyzes two reactions: the carboxylation of D-ribulose 1,5-bisphosphate, the primary event in carbon dioxide fixation, as well as the oxidative fragmentation of the pentose substrate in the photorespiration process. Both reactions occur simultaneously and in competition at the same active site.</text>
</comment>
<comment type="catalytic activity">
    <reaction evidence="2">
        <text>2 (2R)-3-phosphoglycerate + 2 H(+) = D-ribulose 1,5-bisphosphate + CO2 + H2O</text>
        <dbReference type="Rhea" id="RHEA:23124"/>
        <dbReference type="ChEBI" id="CHEBI:15377"/>
        <dbReference type="ChEBI" id="CHEBI:15378"/>
        <dbReference type="ChEBI" id="CHEBI:16526"/>
        <dbReference type="ChEBI" id="CHEBI:57870"/>
        <dbReference type="ChEBI" id="CHEBI:58272"/>
        <dbReference type="EC" id="4.1.1.39"/>
    </reaction>
</comment>
<comment type="catalytic activity">
    <reaction evidence="2">
        <text>D-ribulose 1,5-bisphosphate + O2 = 2-phosphoglycolate + (2R)-3-phosphoglycerate + 2 H(+)</text>
        <dbReference type="Rhea" id="RHEA:36631"/>
        <dbReference type="ChEBI" id="CHEBI:15378"/>
        <dbReference type="ChEBI" id="CHEBI:15379"/>
        <dbReference type="ChEBI" id="CHEBI:57870"/>
        <dbReference type="ChEBI" id="CHEBI:58033"/>
        <dbReference type="ChEBI" id="CHEBI:58272"/>
    </reaction>
</comment>
<comment type="cofactor">
    <cofactor evidence="2">
        <name>Mg(2+)</name>
        <dbReference type="ChEBI" id="CHEBI:18420"/>
    </cofactor>
    <text evidence="2">Binds 1 Mg(2+) ion per subunit.</text>
</comment>
<comment type="subunit">
    <text evidence="2">Heterohexadecamer of 8 large chains and 8 small chains; disulfide-linked. The disulfide link is formed within the large subunit homodimers.</text>
</comment>
<comment type="subcellular location">
    <subcellularLocation>
        <location>Plastid</location>
        <location>Chloroplast</location>
    </subcellularLocation>
</comment>
<comment type="PTM">
    <text evidence="2">The disulfide bond which can form in the large chain dimeric partners within the hexadecamer appears to be associated with oxidative stress and protein turnover.</text>
</comment>
<comment type="miscellaneous">
    <text evidence="2">The basic functional RuBisCO is composed of a large chain homodimer in a 'head-to-tail' conformation. In form I RuBisCO this homodimer is arranged in a barrel-like tetramer with the small subunits forming a tetrameric 'cap' on each end of the 'barrel'.</text>
</comment>
<comment type="similarity">
    <text evidence="2">Belongs to the RuBisCO large chain family. Type I subfamily.</text>
</comment>
<evidence type="ECO:0000250" key="1">
    <source>
        <dbReference type="UniProtKB" id="O03042"/>
    </source>
</evidence>
<evidence type="ECO:0000255" key="2">
    <source>
        <dbReference type="HAMAP-Rule" id="MF_01338"/>
    </source>
</evidence>
<organism>
    <name type="scientific">Sinapis alba</name>
    <name type="common">White mustard</name>
    <name type="synonym">Brassica hirta</name>
    <dbReference type="NCBI Taxonomy" id="3728"/>
    <lineage>
        <taxon>Eukaryota</taxon>
        <taxon>Viridiplantae</taxon>
        <taxon>Streptophyta</taxon>
        <taxon>Embryophyta</taxon>
        <taxon>Tracheophyta</taxon>
        <taxon>Spermatophyta</taxon>
        <taxon>Magnoliopsida</taxon>
        <taxon>eudicotyledons</taxon>
        <taxon>Gunneridae</taxon>
        <taxon>Pentapetalae</taxon>
        <taxon>rosids</taxon>
        <taxon>malvids</taxon>
        <taxon>Brassicales</taxon>
        <taxon>Brassicaceae</taxon>
        <taxon>Brassiceae</taxon>
        <taxon>Sinapis</taxon>
    </lineage>
</organism>
<proteinExistence type="inferred from homology"/>
<sequence length="473" mass="52439">MSPQTETKASVGFKAGVKDYKLTYYTPDYQTKDTDILAAFRVTPQPGVPPEEAGAAVAAESSTGTWTTVWTDGLTSLDRYKGRCYHIEPVAGEENQFIAYVAYPLDLFEEGSVTNMFTSIVGNVFGFKALRALRLEDLRIPTAYIKTFQGPPHGIQVERDKLNKYGRPLLGCTIKPKLGLSAKNYGRAVYECLRGGLDFTKDDENVNSQPFMRWRDRFLFCAEAIYKAQAETGEIKGHYLNATAGTCEEMIKRAVFARELGVPIVMHDYLTGGFTANTSLAHYCRDNGLLLHIHRAMHAVIDRQKNHGMHFRVLAKALRLSGGDHVHSGTVVGKLEGEREITLGFVDLLRDDFIEKDRSRGIYFTQDWVSLPGVLPVASGGIHVWHMPALTEIFGDDSVLQFGGGTLGHPWGNAPGAVANRVALEACVQARNEGRDLAREGNEIIREASKWSPELAAACEVWKEIKFEFPAMD</sequence>
<name>RBL_SINAL</name>
<accession>P48715</accession>
<keyword id="KW-0113">Calvin cycle</keyword>
<keyword id="KW-0120">Carbon dioxide fixation</keyword>
<keyword id="KW-0150">Chloroplast</keyword>
<keyword id="KW-1015">Disulfide bond</keyword>
<keyword id="KW-0456">Lyase</keyword>
<keyword id="KW-0460">Magnesium</keyword>
<keyword id="KW-0479">Metal-binding</keyword>
<keyword id="KW-0503">Monooxygenase</keyword>
<keyword id="KW-0560">Oxidoreductase</keyword>
<keyword id="KW-0597">Phosphoprotein</keyword>
<keyword id="KW-0601">Photorespiration</keyword>
<keyword id="KW-0602">Photosynthesis</keyword>
<keyword id="KW-0934">Plastid</keyword>
<dbReference type="EC" id="4.1.1.39" evidence="2"/>
<dbReference type="EMBL" id="X73284">
    <property type="protein sequence ID" value="CAA51723.1"/>
    <property type="molecule type" value="Genomic_DNA"/>
</dbReference>
<dbReference type="SMR" id="P48715"/>
<dbReference type="GO" id="GO:0009507">
    <property type="term" value="C:chloroplast"/>
    <property type="evidence" value="ECO:0007669"/>
    <property type="project" value="UniProtKB-SubCell"/>
</dbReference>
<dbReference type="GO" id="GO:0000287">
    <property type="term" value="F:magnesium ion binding"/>
    <property type="evidence" value="ECO:0007669"/>
    <property type="project" value="InterPro"/>
</dbReference>
<dbReference type="GO" id="GO:0004497">
    <property type="term" value="F:monooxygenase activity"/>
    <property type="evidence" value="ECO:0007669"/>
    <property type="project" value="UniProtKB-KW"/>
</dbReference>
<dbReference type="GO" id="GO:0016984">
    <property type="term" value="F:ribulose-bisphosphate carboxylase activity"/>
    <property type="evidence" value="ECO:0007669"/>
    <property type="project" value="UniProtKB-EC"/>
</dbReference>
<dbReference type="GO" id="GO:0009853">
    <property type="term" value="P:photorespiration"/>
    <property type="evidence" value="ECO:0007669"/>
    <property type="project" value="UniProtKB-KW"/>
</dbReference>
<dbReference type="GO" id="GO:0019253">
    <property type="term" value="P:reductive pentose-phosphate cycle"/>
    <property type="evidence" value="ECO:0007669"/>
    <property type="project" value="UniProtKB-KW"/>
</dbReference>
<dbReference type="CDD" id="cd08212">
    <property type="entry name" value="RuBisCO_large_I"/>
    <property type="match status" value="1"/>
</dbReference>
<dbReference type="FunFam" id="3.20.20.110:FF:000001">
    <property type="entry name" value="Ribulose bisphosphate carboxylase large chain"/>
    <property type="match status" value="1"/>
</dbReference>
<dbReference type="FunFam" id="3.30.70.150:FF:000001">
    <property type="entry name" value="Ribulose bisphosphate carboxylase large chain"/>
    <property type="match status" value="1"/>
</dbReference>
<dbReference type="Gene3D" id="3.20.20.110">
    <property type="entry name" value="Ribulose bisphosphate carboxylase, large subunit, C-terminal domain"/>
    <property type="match status" value="1"/>
</dbReference>
<dbReference type="Gene3D" id="3.30.70.150">
    <property type="entry name" value="RuBisCO large subunit, N-terminal domain"/>
    <property type="match status" value="1"/>
</dbReference>
<dbReference type="HAMAP" id="MF_01338">
    <property type="entry name" value="RuBisCO_L_type1"/>
    <property type="match status" value="1"/>
</dbReference>
<dbReference type="InterPro" id="IPR033966">
    <property type="entry name" value="RuBisCO"/>
</dbReference>
<dbReference type="InterPro" id="IPR020878">
    <property type="entry name" value="RuBisCo_large_chain_AS"/>
</dbReference>
<dbReference type="InterPro" id="IPR000685">
    <property type="entry name" value="RuBisCO_lsu_C"/>
</dbReference>
<dbReference type="InterPro" id="IPR036376">
    <property type="entry name" value="RuBisCO_lsu_C_sf"/>
</dbReference>
<dbReference type="InterPro" id="IPR017443">
    <property type="entry name" value="RuBisCO_lsu_fd_N"/>
</dbReference>
<dbReference type="InterPro" id="IPR036422">
    <property type="entry name" value="RuBisCO_lsu_N_sf"/>
</dbReference>
<dbReference type="InterPro" id="IPR020888">
    <property type="entry name" value="RuBisCO_lsuI"/>
</dbReference>
<dbReference type="NCBIfam" id="NF003252">
    <property type="entry name" value="PRK04208.1"/>
    <property type="match status" value="1"/>
</dbReference>
<dbReference type="PANTHER" id="PTHR42704">
    <property type="entry name" value="RIBULOSE BISPHOSPHATE CARBOXYLASE"/>
    <property type="match status" value="1"/>
</dbReference>
<dbReference type="PANTHER" id="PTHR42704:SF15">
    <property type="entry name" value="RIBULOSE BISPHOSPHATE CARBOXYLASE LARGE CHAIN"/>
    <property type="match status" value="1"/>
</dbReference>
<dbReference type="Pfam" id="PF00016">
    <property type="entry name" value="RuBisCO_large"/>
    <property type="match status" value="1"/>
</dbReference>
<dbReference type="Pfam" id="PF02788">
    <property type="entry name" value="RuBisCO_large_N"/>
    <property type="match status" value="1"/>
</dbReference>
<dbReference type="SFLD" id="SFLDG01052">
    <property type="entry name" value="RuBisCO"/>
    <property type="match status" value="1"/>
</dbReference>
<dbReference type="SFLD" id="SFLDS00014">
    <property type="entry name" value="RuBisCO"/>
    <property type="match status" value="1"/>
</dbReference>
<dbReference type="SFLD" id="SFLDG00301">
    <property type="entry name" value="RuBisCO-like_proteins"/>
    <property type="match status" value="1"/>
</dbReference>
<dbReference type="SUPFAM" id="SSF51649">
    <property type="entry name" value="RuBisCo, C-terminal domain"/>
    <property type="match status" value="1"/>
</dbReference>
<dbReference type="SUPFAM" id="SSF54966">
    <property type="entry name" value="RuBisCO, large subunit, small (N-terminal) domain"/>
    <property type="match status" value="1"/>
</dbReference>
<dbReference type="PROSITE" id="PS00157">
    <property type="entry name" value="RUBISCO_LARGE"/>
    <property type="match status" value="1"/>
</dbReference>
<protein>
    <recommendedName>
        <fullName evidence="2">Ribulose bisphosphate carboxylase large chain</fullName>
        <shortName evidence="2">RuBisCO large subunit</shortName>
        <ecNumber evidence="2">4.1.1.39</ecNumber>
    </recommendedName>
</protein>
<gene>
    <name evidence="2" type="primary">rbcL</name>
</gene>
<reference key="1">
    <citation type="submission" date="1993-06" db="EMBL/GenBank/DDBJ databases">
        <authorList>
            <person name="Capesius I."/>
        </authorList>
    </citation>
    <scope>NUCLEOTIDE SEQUENCE [GENOMIC DNA]</scope>
</reference>